<protein>
    <recommendedName>
        <fullName evidence="1">Probable manganese-dependent inorganic pyrophosphatase</fullName>
        <ecNumber evidence="1">3.6.1.1</ecNumber>
    </recommendedName>
    <alternativeName>
        <fullName evidence="1">Pyrophosphate phospho-hydrolase</fullName>
        <shortName evidence="1">PPase</shortName>
    </alternativeName>
</protein>
<accession>Q3K0B5</accession>
<comment type="catalytic activity">
    <reaction evidence="1">
        <text>diphosphate + H2O = 2 phosphate + H(+)</text>
        <dbReference type="Rhea" id="RHEA:24576"/>
        <dbReference type="ChEBI" id="CHEBI:15377"/>
        <dbReference type="ChEBI" id="CHEBI:15378"/>
        <dbReference type="ChEBI" id="CHEBI:33019"/>
        <dbReference type="ChEBI" id="CHEBI:43474"/>
        <dbReference type="EC" id="3.6.1.1"/>
    </reaction>
</comment>
<comment type="cofactor">
    <cofactor evidence="1">
        <name>Mn(2+)</name>
        <dbReference type="ChEBI" id="CHEBI:29035"/>
    </cofactor>
    <text evidence="1">Binds 2 manganese ions per subunit.</text>
</comment>
<comment type="subcellular location">
    <subcellularLocation>
        <location evidence="1">Cytoplasm</location>
    </subcellularLocation>
</comment>
<comment type="similarity">
    <text evidence="1">Belongs to the PPase class C family.</text>
</comment>
<evidence type="ECO:0000255" key="1">
    <source>
        <dbReference type="HAMAP-Rule" id="MF_00207"/>
    </source>
</evidence>
<sequence>MSKILVFGHQNPDSDAIGSSVAFAYLAKEAWGLDTEAVALGTPNEETAYVLDYFGVQAPRVVESAKAEGVETVILTDHNEFQQSISDIKDVTVYGVVDHHRVANFETANPLYMRLEPVGSASSIVYRMFKENGVSVPKELAGLLLSGLISDTLLLKSPTTHASDIPVAKELAELAGVNLEEYGLEMLKAGTNLSSKTAAELIDIDAKTFELNGEAVRVAQVNTVDINDILARQEEIEVAIQEAIVTEGYSDFVLMITDIVNSNSEILALGSNMAKVEAAFEFTLENNHAFLAGAVSRKKQVVPQLTESYNA</sequence>
<feature type="chain" id="PRO_1000012324" description="Probable manganese-dependent inorganic pyrophosphatase">
    <location>
        <begin position="1"/>
        <end position="311"/>
    </location>
</feature>
<feature type="binding site" evidence="1">
    <location>
        <position position="9"/>
    </location>
    <ligand>
        <name>Mn(2+)</name>
        <dbReference type="ChEBI" id="CHEBI:29035"/>
        <label>1</label>
    </ligand>
</feature>
<feature type="binding site" evidence="1">
    <location>
        <position position="13"/>
    </location>
    <ligand>
        <name>Mn(2+)</name>
        <dbReference type="ChEBI" id="CHEBI:29035"/>
        <label>1</label>
    </ligand>
</feature>
<feature type="binding site" evidence="1">
    <location>
        <position position="15"/>
    </location>
    <ligand>
        <name>Mn(2+)</name>
        <dbReference type="ChEBI" id="CHEBI:29035"/>
        <label>2</label>
    </ligand>
</feature>
<feature type="binding site" evidence="1">
    <location>
        <position position="77"/>
    </location>
    <ligand>
        <name>Mn(2+)</name>
        <dbReference type="ChEBI" id="CHEBI:29035"/>
        <label>1</label>
    </ligand>
</feature>
<feature type="binding site" evidence="1">
    <location>
        <position position="77"/>
    </location>
    <ligand>
        <name>Mn(2+)</name>
        <dbReference type="ChEBI" id="CHEBI:29035"/>
        <label>2</label>
    </ligand>
</feature>
<feature type="binding site" evidence="1">
    <location>
        <position position="99"/>
    </location>
    <ligand>
        <name>Mn(2+)</name>
        <dbReference type="ChEBI" id="CHEBI:29035"/>
        <label>2</label>
    </ligand>
</feature>
<feature type="binding site" evidence="1">
    <location>
        <position position="151"/>
    </location>
    <ligand>
        <name>Mn(2+)</name>
        <dbReference type="ChEBI" id="CHEBI:29035"/>
        <label>2</label>
    </ligand>
</feature>
<keyword id="KW-0963">Cytoplasm</keyword>
<keyword id="KW-0378">Hydrolase</keyword>
<keyword id="KW-0464">Manganese</keyword>
<keyword id="KW-0479">Metal-binding</keyword>
<dbReference type="EC" id="3.6.1.1" evidence="1"/>
<dbReference type="EMBL" id="CP000114">
    <property type="protein sequence ID" value="ABA46186.1"/>
    <property type="molecule type" value="Genomic_DNA"/>
</dbReference>
<dbReference type="RefSeq" id="WP_000036019.1">
    <property type="nucleotide sequence ID" value="NC_007432.1"/>
</dbReference>
<dbReference type="SMR" id="Q3K0B5"/>
<dbReference type="KEGG" id="sak:SAK_1430"/>
<dbReference type="HOGENOM" id="CLU_025243_0_1_9"/>
<dbReference type="BRENDA" id="3.6.1.1">
    <property type="organism ID" value="5917"/>
</dbReference>
<dbReference type="EvolutionaryTrace" id="Q3K0B5"/>
<dbReference type="GO" id="GO:0005737">
    <property type="term" value="C:cytoplasm"/>
    <property type="evidence" value="ECO:0007669"/>
    <property type="project" value="UniProtKB-SubCell"/>
</dbReference>
<dbReference type="GO" id="GO:0004427">
    <property type="term" value="F:inorganic diphosphate phosphatase activity"/>
    <property type="evidence" value="ECO:0007669"/>
    <property type="project" value="UniProtKB-UniRule"/>
</dbReference>
<dbReference type="GO" id="GO:0030145">
    <property type="term" value="F:manganese ion binding"/>
    <property type="evidence" value="ECO:0007669"/>
    <property type="project" value="UniProtKB-UniRule"/>
</dbReference>
<dbReference type="FunFam" id="3.10.310.20:FF:000001">
    <property type="entry name" value="Probable manganese-dependent inorganic pyrophosphatase"/>
    <property type="match status" value="1"/>
</dbReference>
<dbReference type="FunFam" id="3.90.1640.10:FF:000001">
    <property type="entry name" value="Probable manganese-dependent inorganic pyrophosphatase"/>
    <property type="match status" value="1"/>
</dbReference>
<dbReference type="Gene3D" id="3.10.310.20">
    <property type="entry name" value="DHHA2 domain"/>
    <property type="match status" value="1"/>
</dbReference>
<dbReference type="Gene3D" id="3.90.1640.10">
    <property type="entry name" value="inorganic pyrophosphatase (n-terminal core)"/>
    <property type="match status" value="1"/>
</dbReference>
<dbReference type="HAMAP" id="MF_00207">
    <property type="entry name" value="PPase_C"/>
    <property type="match status" value="1"/>
</dbReference>
<dbReference type="InterPro" id="IPR001667">
    <property type="entry name" value="DDH_dom"/>
</dbReference>
<dbReference type="InterPro" id="IPR038763">
    <property type="entry name" value="DHH_sf"/>
</dbReference>
<dbReference type="InterPro" id="IPR004097">
    <property type="entry name" value="DHHA2"/>
</dbReference>
<dbReference type="InterPro" id="IPR038222">
    <property type="entry name" value="DHHA2_dom_sf"/>
</dbReference>
<dbReference type="InterPro" id="IPR022934">
    <property type="entry name" value="Mn-dep_inorganic_PyrPase"/>
</dbReference>
<dbReference type="InterPro" id="IPR051319">
    <property type="entry name" value="Oligoribo/pAp-PDE_c-di-AMP_PDE"/>
</dbReference>
<dbReference type="NCBIfam" id="NF003877">
    <property type="entry name" value="PRK05427.1"/>
    <property type="match status" value="1"/>
</dbReference>
<dbReference type="PANTHER" id="PTHR47618">
    <property type="entry name" value="BIFUNCTIONAL OLIGORIBONUCLEASE AND PAP PHOSPHATASE NRNA"/>
    <property type="match status" value="1"/>
</dbReference>
<dbReference type="PANTHER" id="PTHR47618:SF1">
    <property type="entry name" value="BIFUNCTIONAL OLIGORIBONUCLEASE AND PAP PHOSPHATASE NRNA"/>
    <property type="match status" value="1"/>
</dbReference>
<dbReference type="Pfam" id="PF01368">
    <property type="entry name" value="DHH"/>
    <property type="match status" value="1"/>
</dbReference>
<dbReference type="Pfam" id="PF02833">
    <property type="entry name" value="DHHA2"/>
    <property type="match status" value="1"/>
</dbReference>
<dbReference type="SMART" id="SM01131">
    <property type="entry name" value="DHHA2"/>
    <property type="match status" value="1"/>
</dbReference>
<dbReference type="SUPFAM" id="SSF64182">
    <property type="entry name" value="DHH phosphoesterases"/>
    <property type="match status" value="1"/>
</dbReference>
<organism>
    <name type="scientific">Streptococcus agalactiae serotype Ia (strain ATCC 27591 / A909 / CDC SS700)</name>
    <dbReference type="NCBI Taxonomy" id="205921"/>
    <lineage>
        <taxon>Bacteria</taxon>
        <taxon>Bacillati</taxon>
        <taxon>Bacillota</taxon>
        <taxon>Bacilli</taxon>
        <taxon>Lactobacillales</taxon>
        <taxon>Streptococcaceae</taxon>
        <taxon>Streptococcus</taxon>
    </lineage>
</organism>
<gene>
    <name evidence="1" type="primary">ppaC</name>
    <name type="ordered locus">SAK_1430</name>
</gene>
<reference key="1">
    <citation type="journal article" date="2005" name="Proc. Natl. Acad. Sci. U.S.A.">
        <title>Genome analysis of multiple pathogenic isolates of Streptococcus agalactiae: implications for the microbial 'pan-genome'.</title>
        <authorList>
            <person name="Tettelin H."/>
            <person name="Masignani V."/>
            <person name="Cieslewicz M.J."/>
            <person name="Donati C."/>
            <person name="Medini D."/>
            <person name="Ward N.L."/>
            <person name="Angiuoli S.V."/>
            <person name="Crabtree J."/>
            <person name="Jones A.L."/>
            <person name="Durkin A.S."/>
            <person name="DeBoy R.T."/>
            <person name="Davidsen T.M."/>
            <person name="Mora M."/>
            <person name="Scarselli M."/>
            <person name="Margarit y Ros I."/>
            <person name="Peterson J.D."/>
            <person name="Hauser C.R."/>
            <person name="Sundaram J.P."/>
            <person name="Nelson W.C."/>
            <person name="Madupu R."/>
            <person name="Brinkac L.M."/>
            <person name="Dodson R.J."/>
            <person name="Rosovitz M.J."/>
            <person name="Sullivan S.A."/>
            <person name="Daugherty S.C."/>
            <person name="Haft D.H."/>
            <person name="Selengut J."/>
            <person name="Gwinn M.L."/>
            <person name="Zhou L."/>
            <person name="Zafar N."/>
            <person name="Khouri H."/>
            <person name="Radune D."/>
            <person name="Dimitrov G."/>
            <person name="Watkins K."/>
            <person name="O'Connor K.J."/>
            <person name="Smith S."/>
            <person name="Utterback T.R."/>
            <person name="White O."/>
            <person name="Rubens C.E."/>
            <person name="Grandi G."/>
            <person name="Madoff L.C."/>
            <person name="Kasper D.L."/>
            <person name="Telford J.L."/>
            <person name="Wessels M.R."/>
            <person name="Rappuoli R."/>
            <person name="Fraser C.M."/>
        </authorList>
    </citation>
    <scope>NUCLEOTIDE SEQUENCE [LARGE SCALE GENOMIC DNA]</scope>
    <source>
        <strain>ATCC 27591 / A909 / CDC SS700</strain>
    </source>
</reference>
<name>PPAC_STRA1</name>
<proteinExistence type="inferred from homology"/>